<protein>
    <recommendedName>
        <fullName evidence="1">Fumarase D</fullName>
        <ecNumber evidence="1">4.2.1.2</ecNumber>
    </recommendedName>
</protein>
<keyword id="KW-0456">Lyase</keyword>
<keyword id="KW-1185">Reference proteome</keyword>
<organism>
    <name type="scientific">Shigella flexneri</name>
    <dbReference type="NCBI Taxonomy" id="623"/>
    <lineage>
        <taxon>Bacteria</taxon>
        <taxon>Pseudomonadati</taxon>
        <taxon>Pseudomonadota</taxon>
        <taxon>Gammaproteobacteria</taxon>
        <taxon>Enterobacterales</taxon>
        <taxon>Enterobacteriaceae</taxon>
        <taxon>Shigella</taxon>
    </lineage>
</organism>
<reference key="1">
    <citation type="journal article" date="2002" name="Nucleic Acids Res.">
        <title>Genome sequence of Shigella flexneri 2a: insights into pathogenicity through comparison with genomes of Escherichia coli K12 and O157.</title>
        <authorList>
            <person name="Jin Q."/>
            <person name="Yuan Z."/>
            <person name="Xu J."/>
            <person name="Wang Y."/>
            <person name="Shen Y."/>
            <person name="Lu W."/>
            <person name="Wang J."/>
            <person name="Liu H."/>
            <person name="Yang J."/>
            <person name="Yang F."/>
            <person name="Zhang X."/>
            <person name="Zhang J."/>
            <person name="Yang G."/>
            <person name="Wu H."/>
            <person name="Qu D."/>
            <person name="Dong J."/>
            <person name="Sun L."/>
            <person name="Xue Y."/>
            <person name="Zhao A."/>
            <person name="Gao Y."/>
            <person name="Zhu J."/>
            <person name="Kan B."/>
            <person name="Ding K."/>
            <person name="Chen S."/>
            <person name="Cheng H."/>
            <person name="Yao Z."/>
            <person name="He B."/>
            <person name="Chen R."/>
            <person name="Ma D."/>
            <person name="Qiang B."/>
            <person name="Wen Y."/>
            <person name="Hou Y."/>
            <person name="Yu J."/>
        </authorList>
    </citation>
    <scope>NUCLEOTIDE SEQUENCE [LARGE SCALE GENOMIC DNA]</scope>
    <source>
        <strain>301 / Serotype 2a</strain>
    </source>
</reference>
<reference key="2">
    <citation type="journal article" date="2003" name="Infect. Immun.">
        <title>Complete genome sequence and comparative genomics of Shigella flexneri serotype 2a strain 2457T.</title>
        <authorList>
            <person name="Wei J."/>
            <person name="Goldberg M.B."/>
            <person name="Burland V."/>
            <person name="Venkatesan M.M."/>
            <person name="Deng W."/>
            <person name="Fournier G."/>
            <person name="Mayhew G.F."/>
            <person name="Plunkett G. III"/>
            <person name="Rose D.J."/>
            <person name="Darling A."/>
            <person name="Mau B."/>
            <person name="Perna N.T."/>
            <person name="Payne S.M."/>
            <person name="Runyen-Janecky L.J."/>
            <person name="Zhou S."/>
            <person name="Schwartz D.C."/>
            <person name="Blattner F.R."/>
        </authorList>
    </citation>
    <scope>NUCLEOTIDE SEQUENCE [LARGE SCALE GENOMIC DNA]</scope>
    <source>
        <strain>ATCC 700930 / 2457T / Serotype 2a</strain>
    </source>
</reference>
<accession>P0ACX8</accession>
<accession>P77274</accession>
<sequence>MGNRTKEDELYREMCRVVGKVVLEMRDLGQEPKHIVIAGVLRTALANKRIQRSELEKQAMETVINALVK</sequence>
<feature type="chain" id="PRO_0000168985" description="Fumarase D">
    <location>
        <begin position="1"/>
        <end position="69"/>
    </location>
</feature>
<gene>
    <name evidence="1" type="primary">fumD</name>
    <name type="synonym">ydhZ</name>
    <name type="ordered locus">SF1703</name>
    <name type="ordered locus">S1835</name>
</gene>
<proteinExistence type="inferred from homology"/>
<comment type="function">
    <text evidence="1">In vitro catalyzes the addition of water to fumarate, forming malate. Cannot catalyze the reverse reaction. Cannot use the cis-isomer maleate as substrate.</text>
</comment>
<comment type="catalytic activity">
    <reaction evidence="1">
        <text>(S)-malate = fumarate + H2O</text>
        <dbReference type="Rhea" id="RHEA:12460"/>
        <dbReference type="ChEBI" id="CHEBI:15377"/>
        <dbReference type="ChEBI" id="CHEBI:15589"/>
        <dbReference type="ChEBI" id="CHEBI:29806"/>
        <dbReference type="EC" id="4.2.1.2"/>
    </reaction>
</comment>
<comment type="similarity">
    <text evidence="2">Belongs to the FumD family.</text>
</comment>
<evidence type="ECO:0000250" key="1">
    <source>
        <dbReference type="UniProtKB" id="P0ACX5"/>
    </source>
</evidence>
<evidence type="ECO:0000305" key="2"/>
<name>FUMD_SHIFL</name>
<dbReference type="EC" id="4.2.1.2" evidence="1"/>
<dbReference type="EMBL" id="AE005674">
    <property type="protein sequence ID" value="AAN43280.1"/>
    <property type="molecule type" value="Genomic_DNA"/>
</dbReference>
<dbReference type="EMBL" id="AE014073">
    <property type="protein sequence ID" value="AAP17167.1"/>
    <property type="molecule type" value="Genomic_DNA"/>
</dbReference>
<dbReference type="RefSeq" id="NP_707573.1">
    <property type="nucleotide sequence ID" value="NC_004337.2"/>
</dbReference>
<dbReference type="RefSeq" id="WP_000528342.1">
    <property type="nucleotide sequence ID" value="NZ_WPGW01000025.1"/>
</dbReference>
<dbReference type="SMR" id="P0ACX8"/>
<dbReference type="STRING" id="198214.SF1703"/>
<dbReference type="PaxDb" id="198214-SF1703"/>
<dbReference type="GeneID" id="1024874"/>
<dbReference type="GeneID" id="93775830"/>
<dbReference type="KEGG" id="sfl:SF1703"/>
<dbReference type="KEGG" id="sfx:S1835"/>
<dbReference type="PATRIC" id="fig|198214.7.peg.2015"/>
<dbReference type="HOGENOM" id="CLU_2755438_0_0_6"/>
<dbReference type="Proteomes" id="UP000001006">
    <property type="component" value="Chromosome"/>
</dbReference>
<dbReference type="Proteomes" id="UP000002673">
    <property type="component" value="Chromosome"/>
</dbReference>
<dbReference type="GO" id="GO:0004333">
    <property type="term" value="F:fumarate hydratase activity"/>
    <property type="evidence" value="ECO:0007669"/>
    <property type="project" value="UniProtKB-EC"/>
</dbReference>
<dbReference type="InterPro" id="IPR024493">
    <property type="entry name" value="FumD"/>
</dbReference>
<dbReference type="NCBIfam" id="NF007630">
    <property type="entry name" value="PRK10292.1"/>
    <property type="match status" value="1"/>
</dbReference>
<dbReference type="Pfam" id="PF10965">
    <property type="entry name" value="DUF2767"/>
    <property type="match status" value="1"/>
</dbReference>